<gene>
    <name type="primary">gar1</name>
    <name type="synonym">nola1</name>
    <name type="ORF">DDB_G0279013</name>
</gene>
<reference key="1">
    <citation type="journal article" date="2005" name="Nature">
        <title>The genome of the social amoeba Dictyostelium discoideum.</title>
        <authorList>
            <person name="Eichinger L."/>
            <person name="Pachebat J.A."/>
            <person name="Gloeckner G."/>
            <person name="Rajandream M.A."/>
            <person name="Sucgang R."/>
            <person name="Berriman M."/>
            <person name="Song J."/>
            <person name="Olsen R."/>
            <person name="Szafranski K."/>
            <person name="Xu Q."/>
            <person name="Tunggal B."/>
            <person name="Kummerfeld S."/>
            <person name="Madera M."/>
            <person name="Konfortov B.A."/>
            <person name="Rivero F."/>
            <person name="Bankier A.T."/>
            <person name="Lehmann R."/>
            <person name="Hamlin N."/>
            <person name="Davies R."/>
            <person name="Gaudet P."/>
            <person name="Fey P."/>
            <person name="Pilcher K."/>
            <person name="Chen G."/>
            <person name="Saunders D."/>
            <person name="Sodergren E.J."/>
            <person name="Davis P."/>
            <person name="Kerhornou A."/>
            <person name="Nie X."/>
            <person name="Hall N."/>
            <person name="Anjard C."/>
            <person name="Hemphill L."/>
            <person name="Bason N."/>
            <person name="Farbrother P."/>
            <person name="Desany B."/>
            <person name="Just E."/>
            <person name="Morio T."/>
            <person name="Rost R."/>
            <person name="Churcher C.M."/>
            <person name="Cooper J."/>
            <person name="Haydock S."/>
            <person name="van Driessche N."/>
            <person name="Cronin A."/>
            <person name="Goodhead I."/>
            <person name="Muzny D.M."/>
            <person name="Mourier T."/>
            <person name="Pain A."/>
            <person name="Lu M."/>
            <person name="Harper D."/>
            <person name="Lindsay R."/>
            <person name="Hauser H."/>
            <person name="James K.D."/>
            <person name="Quiles M."/>
            <person name="Madan Babu M."/>
            <person name="Saito T."/>
            <person name="Buchrieser C."/>
            <person name="Wardroper A."/>
            <person name="Felder M."/>
            <person name="Thangavelu M."/>
            <person name="Johnson D."/>
            <person name="Knights A."/>
            <person name="Loulseged H."/>
            <person name="Mungall K.L."/>
            <person name="Oliver K."/>
            <person name="Price C."/>
            <person name="Quail M.A."/>
            <person name="Urushihara H."/>
            <person name="Hernandez J."/>
            <person name="Rabbinowitsch E."/>
            <person name="Steffen D."/>
            <person name="Sanders M."/>
            <person name="Ma J."/>
            <person name="Kohara Y."/>
            <person name="Sharp S."/>
            <person name="Simmonds M.N."/>
            <person name="Spiegler S."/>
            <person name="Tivey A."/>
            <person name="Sugano S."/>
            <person name="White B."/>
            <person name="Walker D."/>
            <person name="Woodward J.R."/>
            <person name="Winckler T."/>
            <person name="Tanaka Y."/>
            <person name="Shaulsky G."/>
            <person name="Schleicher M."/>
            <person name="Weinstock G.M."/>
            <person name="Rosenthal A."/>
            <person name="Cox E.C."/>
            <person name="Chisholm R.L."/>
            <person name="Gibbs R.A."/>
            <person name="Loomis W.F."/>
            <person name="Platzer M."/>
            <person name="Kay R.R."/>
            <person name="Williams J.G."/>
            <person name="Dear P.H."/>
            <person name="Noegel A.A."/>
            <person name="Barrell B.G."/>
            <person name="Kuspa A."/>
        </authorList>
    </citation>
    <scope>NUCLEOTIDE SEQUENCE [LARGE SCALE GENOMIC DNA]</scope>
    <source>
        <strain>AX4</strain>
    </source>
</reference>
<accession>Q54XE6</accession>
<feature type="chain" id="PRO_0000327523" description="Probable H/ACA ribonucleoprotein complex subunit 1">
    <location>
        <begin position="1"/>
        <end position="230"/>
    </location>
</feature>
<feature type="region of interest" description="Disordered" evidence="2">
    <location>
        <begin position="1"/>
        <end position="53"/>
    </location>
</feature>
<feature type="region of interest" description="RGG-box 1">
    <location>
        <begin position="4"/>
        <end position="56"/>
    </location>
</feature>
<feature type="region of interest" description="Disordered" evidence="2">
    <location>
        <begin position="158"/>
        <end position="230"/>
    </location>
</feature>
<feature type="region of interest" description="RGG-box 2">
    <location>
        <begin position="169"/>
        <end position="229"/>
    </location>
</feature>
<feature type="compositionally biased region" description="Gly residues" evidence="2">
    <location>
        <begin position="1"/>
        <end position="49"/>
    </location>
</feature>
<feature type="compositionally biased region" description="Gly residues" evidence="2">
    <location>
        <begin position="163"/>
        <end position="230"/>
    </location>
</feature>
<name>GAR1_DICDI</name>
<keyword id="KW-0539">Nucleus</keyword>
<keyword id="KW-1185">Reference proteome</keyword>
<keyword id="KW-0677">Repeat</keyword>
<keyword id="KW-0687">Ribonucleoprotein</keyword>
<keyword id="KW-0690">Ribosome biogenesis</keyword>
<keyword id="KW-0694">RNA-binding</keyword>
<keyword id="KW-0698">rRNA processing</keyword>
<organism>
    <name type="scientific">Dictyostelium discoideum</name>
    <name type="common">Social amoeba</name>
    <dbReference type="NCBI Taxonomy" id="44689"/>
    <lineage>
        <taxon>Eukaryota</taxon>
        <taxon>Amoebozoa</taxon>
        <taxon>Evosea</taxon>
        <taxon>Eumycetozoa</taxon>
        <taxon>Dictyostelia</taxon>
        <taxon>Dictyosteliales</taxon>
        <taxon>Dictyosteliaceae</taxon>
        <taxon>Dictyostelium</taxon>
    </lineage>
</organism>
<dbReference type="EMBL" id="AAFI02000026">
    <property type="protein sequence ID" value="EAL67928.1"/>
    <property type="molecule type" value="Genomic_DNA"/>
</dbReference>
<dbReference type="RefSeq" id="XP_641906.1">
    <property type="nucleotide sequence ID" value="XM_636814.1"/>
</dbReference>
<dbReference type="SMR" id="Q54XE6"/>
<dbReference type="FunCoup" id="Q54XE6">
    <property type="interactions" value="67"/>
</dbReference>
<dbReference type="STRING" id="44689.Q54XE6"/>
<dbReference type="PaxDb" id="44689-DDB0235390"/>
<dbReference type="EnsemblProtists" id="EAL67928">
    <property type="protein sequence ID" value="EAL67928"/>
    <property type="gene ID" value="DDB_G0279013"/>
</dbReference>
<dbReference type="GeneID" id="8621829"/>
<dbReference type="KEGG" id="ddi:DDB_G0279013"/>
<dbReference type="dictyBase" id="DDB_G0279013">
    <property type="gene designation" value="nola1"/>
</dbReference>
<dbReference type="VEuPathDB" id="AmoebaDB:DDB_G0279013"/>
<dbReference type="eggNOG" id="KOG3262">
    <property type="taxonomic scope" value="Eukaryota"/>
</dbReference>
<dbReference type="HOGENOM" id="CLU_080002_0_0_1"/>
<dbReference type="InParanoid" id="Q54XE6"/>
<dbReference type="OMA" id="KPQDGIV"/>
<dbReference type="PRO" id="PR:Q54XE6"/>
<dbReference type="Proteomes" id="UP000002195">
    <property type="component" value="Chromosome 3"/>
</dbReference>
<dbReference type="GO" id="GO:0031429">
    <property type="term" value="C:box H/ACA snoRNP complex"/>
    <property type="evidence" value="ECO:0000318"/>
    <property type="project" value="GO_Central"/>
</dbReference>
<dbReference type="GO" id="GO:0034513">
    <property type="term" value="F:box H/ACA snoRNA binding"/>
    <property type="evidence" value="ECO:0000318"/>
    <property type="project" value="GO_Central"/>
</dbReference>
<dbReference type="GO" id="GO:0000454">
    <property type="term" value="P:snoRNA guided rRNA pseudouridine synthesis"/>
    <property type="evidence" value="ECO:0000318"/>
    <property type="project" value="GO_Central"/>
</dbReference>
<dbReference type="FunFam" id="2.40.10.230:FF:000001">
    <property type="entry name" value="H/ACA ribonucleoprotein complex subunit"/>
    <property type="match status" value="1"/>
</dbReference>
<dbReference type="Gene3D" id="2.40.10.230">
    <property type="entry name" value="Probable tRNA pseudouridine synthase domain"/>
    <property type="match status" value="1"/>
</dbReference>
<dbReference type="InterPro" id="IPR038664">
    <property type="entry name" value="Gar1/Naf1_Cbf5-bd_sf"/>
</dbReference>
<dbReference type="InterPro" id="IPR007504">
    <property type="entry name" value="H/ACA_rnp_Gar1/Naf1"/>
</dbReference>
<dbReference type="InterPro" id="IPR009000">
    <property type="entry name" value="Transl_B-barrel_sf"/>
</dbReference>
<dbReference type="PANTHER" id="PTHR23237:SF6">
    <property type="entry name" value="H_ACA RIBONUCLEOPROTEIN COMPLEX SUBUNIT 1"/>
    <property type="match status" value="1"/>
</dbReference>
<dbReference type="PANTHER" id="PTHR23237">
    <property type="entry name" value="NUCLEOLAR PROTEIN FAMILY A MEMBER 1 SNORNP PROTEIN GAR1"/>
    <property type="match status" value="1"/>
</dbReference>
<dbReference type="Pfam" id="PF04410">
    <property type="entry name" value="Gar1"/>
    <property type="match status" value="1"/>
</dbReference>
<dbReference type="SUPFAM" id="SSF50447">
    <property type="entry name" value="Translation proteins"/>
    <property type="match status" value="1"/>
</dbReference>
<comment type="function">
    <text evidence="1">Required for ribosome biogenesis. Part of a complex which catalyzes pseudouridylation of rRNA. This involves the isomerization of uridine such that the ribose is subsequently attached to C5, instead of the normal N1. Pseudouridine ('psi') residues may serve to stabilize the conformation of rRNAs (By similarity).</text>
</comment>
<comment type="subunit">
    <text evidence="1">Component of the small nucleolar ribonucleoprotein particles containing H/ACA-type snoRNAs (H/ACA snoRNPs).</text>
</comment>
<comment type="subcellular location">
    <subcellularLocation>
        <location evidence="1">Nucleus</location>
        <location evidence="1">Nucleolus</location>
    </subcellularLocation>
</comment>
<comment type="similarity">
    <text evidence="3">Belongs to the GAR1 family.</text>
</comment>
<proteinExistence type="inferred from homology"/>
<protein>
    <recommendedName>
        <fullName>Probable H/ACA ribonucleoprotein complex subunit 1</fullName>
    </recommendedName>
    <alternativeName>
        <fullName>Nucleolar protein family A member 1</fullName>
    </alternativeName>
    <alternativeName>
        <fullName>snoRNP protein GAR1</fullName>
    </alternativeName>
</protein>
<sequence length="230" mass="22373">MSFRGGRGGFGGGDRGGRGGGRGGFGGGDRGGRGGFGGGRGGGRGGFGGDRGDRGGYASGENIEIGVFSHVCEEQIVCKLTATEQVPKFNCKVLSSSKNTIGSVDEIFGPINKVFFSVKLDSGVQATSFKENDKIFVDSNSVLPIKIFLEEPKPIAKVPKTPGAGGAGRGGRGGARGGFGGGRGGGAGRGGFGGGRGGSRGGFGGGRGGGSGFGGRGGSRGGRGGGRGGF</sequence>
<evidence type="ECO:0000250" key="1"/>
<evidence type="ECO:0000256" key="2">
    <source>
        <dbReference type="SAM" id="MobiDB-lite"/>
    </source>
</evidence>
<evidence type="ECO:0000305" key="3"/>